<reference key="1">
    <citation type="journal article" date="2004" name="Science">
        <title>A predator unmasked: life cycle of Bdellovibrio bacteriovorus from a genomic perspective.</title>
        <authorList>
            <person name="Rendulic S."/>
            <person name="Jagtap P."/>
            <person name="Rosinus A."/>
            <person name="Eppinger M."/>
            <person name="Baar C."/>
            <person name="Lanz C."/>
            <person name="Keller H."/>
            <person name="Lambert C."/>
            <person name="Evans K.J."/>
            <person name="Goesmann A."/>
            <person name="Meyer F."/>
            <person name="Sockett R.E."/>
            <person name="Schuster S.C."/>
        </authorList>
    </citation>
    <scope>NUCLEOTIDE SEQUENCE [LARGE SCALE GENOMIC DNA]</scope>
    <source>
        <strain>ATCC 15356 / DSM 50701 / NCIMB 9529 / HD100</strain>
    </source>
</reference>
<keyword id="KW-0378">Hydrolase</keyword>
<keyword id="KW-0479">Metal-binding</keyword>
<keyword id="KW-1185">Reference proteome</keyword>
<keyword id="KW-0862">Zinc</keyword>
<protein>
    <recommendedName>
        <fullName evidence="1">Hydroxyacylglutathione hydrolase</fullName>
        <ecNumber evidence="1">3.1.2.6</ecNumber>
    </recommendedName>
    <alternativeName>
        <fullName evidence="1">Glyoxalase II</fullName>
        <shortName evidence="1">Glx II</shortName>
    </alternativeName>
</protein>
<name>GLO2_BDEBA</name>
<comment type="function">
    <text evidence="1">Thiolesterase that catalyzes the hydrolysis of S-D-lactoyl-glutathione to form glutathione and D-lactic acid.</text>
</comment>
<comment type="catalytic activity">
    <reaction evidence="1">
        <text>an S-(2-hydroxyacyl)glutathione + H2O = a 2-hydroxy carboxylate + glutathione + H(+)</text>
        <dbReference type="Rhea" id="RHEA:21864"/>
        <dbReference type="ChEBI" id="CHEBI:15377"/>
        <dbReference type="ChEBI" id="CHEBI:15378"/>
        <dbReference type="ChEBI" id="CHEBI:57925"/>
        <dbReference type="ChEBI" id="CHEBI:58896"/>
        <dbReference type="ChEBI" id="CHEBI:71261"/>
        <dbReference type="EC" id="3.1.2.6"/>
    </reaction>
</comment>
<comment type="cofactor">
    <cofactor evidence="1">
        <name>Zn(2+)</name>
        <dbReference type="ChEBI" id="CHEBI:29105"/>
    </cofactor>
    <text evidence="1">Binds 2 Zn(2+) ions per subunit.</text>
</comment>
<comment type="pathway">
    <text evidence="1">Secondary metabolite metabolism; methylglyoxal degradation; (R)-lactate from methylglyoxal: step 2/2.</text>
</comment>
<comment type="subunit">
    <text evidence="1">Monomer.</text>
</comment>
<comment type="similarity">
    <text evidence="1">Belongs to the metallo-beta-lactamase superfamily. Glyoxalase II family.</text>
</comment>
<gene>
    <name evidence="1" type="primary">gloB</name>
    <name type="ordered locus">Bd2204</name>
</gene>
<organism>
    <name type="scientific">Bdellovibrio bacteriovorus (strain ATCC 15356 / DSM 50701 / NCIMB 9529 / HD100)</name>
    <dbReference type="NCBI Taxonomy" id="264462"/>
    <lineage>
        <taxon>Bacteria</taxon>
        <taxon>Pseudomonadati</taxon>
        <taxon>Bdellovibrionota</taxon>
        <taxon>Bdellovibrionia</taxon>
        <taxon>Bdellovibrionales</taxon>
        <taxon>Pseudobdellovibrionaceae</taxon>
        <taxon>Bdellovibrio</taxon>
    </lineage>
</organism>
<proteinExistence type="inferred from homology"/>
<dbReference type="EC" id="3.1.2.6" evidence="1"/>
<dbReference type="EMBL" id="BX842652">
    <property type="protein sequence ID" value="CAE80038.1"/>
    <property type="molecule type" value="Genomic_DNA"/>
</dbReference>
<dbReference type="RefSeq" id="WP_011164640.1">
    <property type="nucleotide sequence ID" value="NC_005363.1"/>
</dbReference>
<dbReference type="SMR" id="Q6ML19"/>
<dbReference type="STRING" id="264462.Bd2204"/>
<dbReference type="GeneID" id="93013140"/>
<dbReference type="KEGG" id="bba:Bd2204"/>
<dbReference type="eggNOG" id="COG0491">
    <property type="taxonomic scope" value="Bacteria"/>
</dbReference>
<dbReference type="HOGENOM" id="CLU_030571_4_1_7"/>
<dbReference type="UniPathway" id="UPA00619">
    <property type="reaction ID" value="UER00676"/>
</dbReference>
<dbReference type="Proteomes" id="UP000008080">
    <property type="component" value="Chromosome"/>
</dbReference>
<dbReference type="GO" id="GO:0004416">
    <property type="term" value="F:hydroxyacylglutathione hydrolase activity"/>
    <property type="evidence" value="ECO:0007669"/>
    <property type="project" value="UniProtKB-UniRule"/>
</dbReference>
<dbReference type="GO" id="GO:0046872">
    <property type="term" value="F:metal ion binding"/>
    <property type="evidence" value="ECO:0007669"/>
    <property type="project" value="UniProtKB-KW"/>
</dbReference>
<dbReference type="GO" id="GO:0019243">
    <property type="term" value="P:methylglyoxal catabolic process to D-lactate via S-lactoyl-glutathione"/>
    <property type="evidence" value="ECO:0007669"/>
    <property type="project" value="InterPro"/>
</dbReference>
<dbReference type="CDD" id="cd07723">
    <property type="entry name" value="hydroxyacylglutathione_hydrolase_MBL-fold"/>
    <property type="match status" value="1"/>
</dbReference>
<dbReference type="Gene3D" id="3.60.15.10">
    <property type="entry name" value="Ribonuclease Z/Hydroxyacylglutathione hydrolase-like"/>
    <property type="match status" value="1"/>
</dbReference>
<dbReference type="HAMAP" id="MF_01374">
    <property type="entry name" value="Glyoxalase_2"/>
    <property type="match status" value="1"/>
</dbReference>
<dbReference type="InterPro" id="IPR035680">
    <property type="entry name" value="Clx_II_MBL"/>
</dbReference>
<dbReference type="InterPro" id="IPR050110">
    <property type="entry name" value="Glyoxalase_II_hydrolase"/>
</dbReference>
<dbReference type="InterPro" id="IPR032282">
    <property type="entry name" value="HAGH_C"/>
</dbReference>
<dbReference type="InterPro" id="IPR017782">
    <property type="entry name" value="Hydroxyacylglutathione_Hdrlase"/>
</dbReference>
<dbReference type="InterPro" id="IPR001279">
    <property type="entry name" value="Metallo-B-lactamas"/>
</dbReference>
<dbReference type="InterPro" id="IPR036866">
    <property type="entry name" value="RibonucZ/Hydroxyglut_hydro"/>
</dbReference>
<dbReference type="NCBIfam" id="TIGR03413">
    <property type="entry name" value="GSH_gloB"/>
    <property type="match status" value="1"/>
</dbReference>
<dbReference type="PANTHER" id="PTHR43705">
    <property type="entry name" value="HYDROXYACYLGLUTATHIONE HYDROLASE"/>
    <property type="match status" value="1"/>
</dbReference>
<dbReference type="PANTHER" id="PTHR43705:SF1">
    <property type="entry name" value="HYDROXYACYLGLUTATHIONE HYDROLASE GLOB"/>
    <property type="match status" value="1"/>
</dbReference>
<dbReference type="Pfam" id="PF16123">
    <property type="entry name" value="HAGH_C"/>
    <property type="match status" value="1"/>
</dbReference>
<dbReference type="Pfam" id="PF00753">
    <property type="entry name" value="Lactamase_B"/>
    <property type="match status" value="1"/>
</dbReference>
<dbReference type="PIRSF" id="PIRSF005457">
    <property type="entry name" value="Glx"/>
    <property type="match status" value="1"/>
</dbReference>
<dbReference type="SMART" id="SM00849">
    <property type="entry name" value="Lactamase_B"/>
    <property type="match status" value="1"/>
</dbReference>
<dbReference type="SUPFAM" id="SSF56281">
    <property type="entry name" value="Metallo-hydrolase/oxidoreductase"/>
    <property type="match status" value="1"/>
</dbReference>
<accession>Q6ML19</accession>
<evidence type="ECO:0000255" key="1">
    <source>
        <dbReference type="HAMAP-Rule" id="MF_01374"/>
    </source>
</evidence>
<sequence length="251" mass="28494">MAKKEHVELVPIFDDNYVFILTDDATQKAVAVDPGDAGPVIDFLRANKLDLAAILLTHHHSDHIGGVGELKAAFDCPVYAPQKNQKQIPVADQWLKEGDSVTCGPWDFTVMELPGHTLGHIAYWNQKHKWLFSGDVIFGLGCGRLFEGTFEQGYESLQRIKKLPPQTLIYCTHEYTKSNLEFCRILTNQDNTPITGDSEALELYANELSNRRELNLPSVPLKLSIEESVNPFLLARDVEQFRYLRELRNRQ</sequence>
<feature type="chain" id="PRO_0000309626" description="Hydroxyacylglutathione hydrolase">
    <location>
        <begin position="1"/>
        <end position="251"/>
    </location>
</feature>
<feature type="binding site" evidence="1">
    <location>
        <position position="58"/>
    </location>
    <ligand>
        <name>Zn(2+)</name>
        <dbReference type="ChEBI" id="CHEBI:29105"/>
        <label>1</label>
    </ligand>
</feature>
<feature type="binding site" evidence="1">
    <location>
        <position position="60"/>
    </location>
    <ligand>
        <name>Zn(2+)</name>
        <dbReference type="ChEBI" id="CHEBI:29105"/>
        <label>1</label>
    </ligand>
</feature>
<feature type="binding site" evidence="1">
    <location>
        <position position="62"/>
    </location>
    <ligand>
        <name>Zn(2+)</name>
        <dbReference type="ChEBI" id="CHEBI:29105"/>
        <label>2</label>
    </ligand>
</feature>
<feature type="binding site" evidence="1">
    <location>
        <position position="63"/>
    </location>
    <ligand>
        <name>Zn(2+)</name>
        <dbReference type="ChEBI" id="CHEBI:29105"/>
        <label>2</label>
    </ligand>
</feature>
<feature type="binding site" evidence="1">
    <location>
        <position position="116"/>
    </location>
    <ligand>
        <name>Zn(2+)</name>
        <dbReference type="ChEBI" id="CHEBI:29105"/>
        <label>1</label>
    </ligand>
</feature>
<feature type="binding site" evidence="1">
    <location>
        <position position="135"/>
    </location>
    <ligand>
        <name>Zn(2+)</name>
        <dbReference type="ChEBI" id="CHEBI:29105"/>
        <label>1</label>
    </ligand>
</feature>
<feature type="binding site" evidence="1">
    <location>
        <position position="135"/>
    </location>
    <ligand>
        <name>Zn(2+)</name>
        <dbReference type="ChEBI" id="CHEBI:29105"/>
        <label>2</label>
    </ligand>
</feature>
<feature type="binding site" evidence="1">
    <location>
        <position position="173"/>
    </location>
    <ligand>
        <name>Zn(2+)</name>
        <dbReference type="ChEBI" id="CHEBI:29105"/>
        <label>2</label>
    </ligand>
</feature>